<keyword id="KW-0004">4Fe-4S</keyword>
<keyword id="KW-0148">Chlorophyll</keyword>
<keyword id="KW-0157">Chromophore</keyword>
<keyword id="KW-0249">Electron transport</keyword>
<keyword id="KW-0408">Iron</keyword>
<keyword id="KW-0411">Iron-sulfur</keyword>
<keyword id="KW-0460">Magnesium</keyword>
<keyword id="KW-0472">Membrane</keyword>
<keyword id="KW-0479">Metal-binding</keyword>
<keyword id="KW-0560">Oxidoreductase</keyword>
<keyword id="KW-0602">Photosynthesis</keyword>
<keyword id="KW-0603">Photosystem I</keyword>
<keyword id="KW-0793">Thylakoid</keyword>
<keyword id="KW-0812">Transmembrane</keyword>
<keyword id="KW-1133">Transmembrane helix</keyword>
<keyword id="KW-0813">Transport</keyword>
<organism>
    <name type="scientific">Prochlorococcus marinus (strain AS9601)</name>
    <dbReference type="NCBI Taxonomy" id="146891"/>
    <lineage>
        <taxon>Bacteria</taxon>
        <taxon>Bacillati</taxon>
        <taxon>Cyanobacteriota</taxon>
        <taxon>Cyanophyceae</taxon>
        <taxon>Synechococcales</taxon>
        <taxon>Prochlorococcaceae</taxon>
        <taxon>Prochlorococcus</taxon>
    </lineage>
</organism>
<accession>A2BTA0</accession>
<name>PSAA_PROMS</name>
<sequence length="767" mass="84373">MTISPPESGEKNKKVLEDPVKADPRPIDFAKLDKPGFWSSKLSKGPKTTTWIWNLHADAHDFDVHTGDAEEATRKIFSAHFGHLAVIFIWMSAAFFHGARFSNYSGWLADPTHVKPGAQQVWAIVGQEMLNADLGANYNGIQISSGIFHMWRAWGITNESELMALAIGAVVMAALMLHAGIFHYHKAAPKMEWFQDIESMLNHHIAGLVGLGSLAWAGHCIHIGAPTAALLDAIDAGSPLVINGKEIATIADMPMPHQLCDPQIIGQIFPGLASGTGNFFSLNWLAFSDFLTFKGGLNPVTGSLWMTDVSHHHLAFGVIAIIGGHMYRTNYGIGHSMKEILDSQQGDPILFPAPKGHQGLFEFMAESRHAQLSVNLAMLGSISILVSHHMYAMPPYPYIATDYMTVLGLFTHHMWIGGLFIVGAGAHAGIAMVRDYDPAKHIDNVLDRILKARDALISHLNWVCMWLGFHSFGLYIHNDTMRALGRPQDMFSDSAIQLQPIFAQWVQSIQASAVGTFLLAGTSEALPHKALSEVFNGSLVEVGGKVAIAPIPLGTADLMIHHIHAFQIHVTVLILLKGVLYARSSRLIPDKASLGFRFPCDGPGRGGTCQVSSWDHVFLALFWMYNCLSIVIFHFSWKMQSDVWGLTGGNFAQSSITINGWLRDFLWAQASQVLTSYGQSISMYGLMFLGAHFIWAFSLMFLFSGRGYWQELFESIVWAHNKLKVAPTIQPRALSITQGRAVGVTHFLVGGIATTWAFFHARLFGLG</sequence>
<evidence type="ECO:0000255" key="1">
    <source>
        <dbReference type="HAMAP-Rule" id="MF_00458"/>
    </source>
</evidence>
<evidence type="ECO:0000256" key="2">
    <source>
        <dbReference type="SAM" id="MobiDB-lite"/>
    </source>
</evidence>
<gene>
    <name evidence="1" type="primary">psaA</name>
    <name type="ordered locus">A9601_17281</name>
</gene>
<proteinExistence type="inferred from homology"/>
<dbReference type="EC" id="1.97.1.12" evidence="1"/>
<dbReference type="EMBL" id="CP000551">
    <property type="protein sequence ID" value="ABM71011.1"/>
    <property type="molecule type" value="Genomic_DNA"/>
</dbReference>
<dbReference type="RefSeq" id="WP_011819136.1">
    <property type="nucleotide sequence ID" value="NC_008816.1"/>
</dbReference>
<dbReference type="SMR" id="A2BTA0"/>
<dbReference type="STRING" id="146891.A9601_17281"/>
<dbReference type="KEGG" id="pmb:A9601_17281"/>
<dbReference type="eggNOG" id="COG2885">
    <property type="taxonomic scope" value="Bacteria"/>
</dbReference>
<dbReference type="HOGENOM" id="CLU_016126_1_0_3"/>
<dbReference type="OrthoDB" id="499313at2"/>
<dbReference type="Proteomes" id="UP000002590">
    <property type="component" value="Chromosome"/>
</dbReference>
<dbReference type="GO" id="GO:0009522">
    <property type="term" value="C:photosystem I"/>
    <property type="evidence" value="ECO:0007669"/>
    <property type="project" value="UniProtKB-KW"/>
</dbReference>
<dbReference type="GO" id="GO:0031676">
    <property type="term" value="C:plasma membrane-derived thylakoid membrane"/>
    <property type="evidence" value="ECO:0007669"/>
    <property type="project" value="UniProtKB-SubCell"/>
</dbReference>
<dbReference type="GO" id="GO:0051539">
    <property type="term" value="F:4 iron, 4 sulfur cluster binding"/>
    <property type="evidence" value="ECO:0007669"/>
    <property type="project" value="UniProtKB-KW"/>
</dbReference>
<dbReference type="GO" id="GO:0016168">
    <property type="term" value="F:chlorophyll binding"/>
    <property type="evidence" value="ECO:0007669"/>
    <property type="project" value="UniProtKB-KW"/>
</dbReference>
<dbReference type="GO" id="GO:0009055">
    <property type="term" value="F:electron transfer activity"/>
    <property type="evidence" value="ECO:0007669"/>
    <property type="project" value="UniProtKB-UniRule"/>
</dbReference>
<dbReference type="GO" id="GO:0000287">
    <property type="term" value="F:magnesium ion binding"/>
    <property type="evidence" value="ECO:0007669"/>
    <property type="project" value="UniProtKB-UniRule"/>
</dbReference>
<dbReference type="GO" id="GO:0016491">
    <property type="term" value="F:oxidoreductase activity"/>
    <property type="evidence" value="ECO:0007669"/>
    <property type="project" value="UniProtKB-KW"/>
</dbReference>
<dbReference type="GO" id="GO:0015979">
    <property type="term" value="P:photosynthesis"/>
    <property type="evidence" value="ECO:0007669"/>
    <property type="project" value="UniProtKB-UniRule"/>
</dbReference>
<dbReference type="Gene3D" id="1.20.1130.10">
    <property type="entry name" value="Photosystem I PsaA/PsaB"/>
    <property type="match status" value="1"/>
</dbReference>
<dbReference type="HAMAP" id="MF_00458">
    <property type="entry name" value="PSI_PsaA"/>
    <property type="match status" value="1"/>
</dbReference>
<dbReference type="InterPro" id="IPR006243">
    <property type="entry name" value="PSI_PsaA"/>
</dbReference>
<dbReference type="InterPro" id="IPR001280">
    <property type="entry name" value="PSI_PsaA/B"/>
</dbReference>
<dbReference type="InterPro" id="IPR020586">
    <property type="entry name" value="PSI_PsaA/B_CS"/>
</dbReference>
<dbReference type="InterPro" id="IPR036408">
    <property type="entry name" value="PSI_PsaA/B_sf"/>
</dbReference>
<dbReference type="NCBIfam" id="TIGR01335">
    <property type="entry name" value="psaA"/>
    <property type="match status" value="1"/>
</dbReference>
<dbReference type="PANTHER" id="PTHR30128">
    <property type="entry name" value="OUTER MEMBRANE PROTEIN, OMPA-RELATED"/>
    <property type="match status" value="1"/>
</dbReference>
<dbReference type="PANTHER" id="PTHR30128:SF19">
    <property type="entry name" value="PHOTOSYSTEM I P700 CHLOROPHYLL A APOPROTEIN A1-RELATED"/>
    <property type="match status" value="1"/>
</dbReference>
<dbReference type="Pfam" id="PF00223">
    <property type="entry name" value="PsaA_PsaB"/>
    <property type="match status" value="1"/>
</dbReference>
<dbReference type="PIRSF" id="PIRSF002905">
    <property type="entry name" value="PSI_A"/>
    <property type="match status" value="1"/>
</dbReference>
<dbReference type="PRINTS" id="PR00257">
    <property type="entry name" value="PHOTSYSPSAAB"/>
</dbReference>
<dbReference type="SUPFAM" id="SSF81558">
    <property type="entry name" value="Photosystem I subunits PsaA/PsaB"/>
    <property type="match status" value="1"/>
</dbReference>
<dbReference type="PROSITE" id="PS00419">
    <property type="entry name" value="PHOTOSYSTEM_I_PSAAB"/>
    <property type="match status" value="1"/>
</dbReference>
<protein>
    <recommendedName>
        <fullName evidence="1">Photosystem I P700 chlorophyll a apoprotein A1</fullName>
        <ecNumber evidence="1">1.97.1.12</ecNumber>
    </recommendedName>
    <alternativeName>
        <fullName evidence="1">PsaA</fullName>
    </alternativeName>
</protein>
<comment type="function">
    <text evidence="1">PsaA and PsaB bind P700, the primary electron donor of photosystem I (PSI), as well as the electron acceptors A0, A1 and FX. PSI is a plastocyanin/cytochrome c6-ferredoxin oxidoreductase, converting photonic excitation into a charge separation, which transfers an electron from the donor P700 chlorophyll pair to the spectroscopically characterized acceptors A0, A1, FX, FA and FB in turn. Oxidized P700 is reduced on the lumenal side of the thylakoid membrane by plastocyanin or cytochrome c6.</text>
</comment>
<comment type="catalytic activity">
    <reaction evidence="1">
        <text>reduced [plastocyanin] + hnu + oxidized [2Fe-2S]-[ferredoxin] = oxidized [plastocyanin] + reduced [2Fe-2S]-[ferredoxin]</text>
        <dbReference type="Rhea" id="RHEA:30407"/>
        <dbReference type="Rhea" id="RHEA-COMP:10000"/>
        <dbReference type="Rhea" id="RHEA-COMP:10001"/>
        <dbReference type="Rhea" id="RHEA-COMP:10039"/>
        <dbReference type="Rhea" id="RHEA-COMP:10040"/>
        <dbReference type="ChEBI" id="CHEBI:29036"/>
        <dbReference type="ChEBI" id="CHEBI:30212"/>
        <dbReference type="ChEBI" id="CHEBI:33737"/>
        <dbReference type="ChEBI" id="CHEBI:33738"/>
        <dbReference type="ChEBI" id="CHEBI:49552"/>
        <dbReference type="EC" id="1.97.1.12"/>
    </reaction>
</comment>
<comment type="cofactor">
    <text evidence="1">PSI electron transfer chain: 5 divinyl chlorophyll a, 1 divinyl chlorophyll a', 2 phylloquinones and 3 4Fe-4S clusters. PSI core antenna: 90 divinyl chlorophyll a, 22 carotenoids, 3 phospholipids and 1 galactolipid. P700 is a divinyl chlorophyll a/divinyl chlorophyll a' dimer, A0 is one or more divinyl chlorophyll a, A1 is one or both phylloquinones and FX is a shared 4Fe-4S iron-sulfur center.</text>
</comment>
<comment type="subunit">
    <text evidence="1">The PsaA/B heterodimer binds the P700 divinyl chlorophyll special pair and subsequent electron acceptors. PSI consists of a core antenna complex that captures photons, and an electron transfer chain that converts photonic excitation into a charge separation. The cyanobacterial PSI reaction center is composed of one copy each of PsaA,B,C,D,E,F,I,J,K,L,M and X, and forms trimeric complexes.</text>
</comment>
<comment type="subcellular location">
    <subcellularLocation>
        <location evidence="1">Cellular thylakoid membrane</location>
        <topology evidence="1">Multi-pass membrane protein</topology>
    </subcellularLocation>
</comment>
<comment type="similarity">
    <text evidence="1">Belongs to the PsaA/PsaB family.</text>
</comment>
<reference key="1">
    <citation type="journal article" date="2007" name="PLoS Genet.">
        <title>Patterns and implications of gene gain and loss in the evolution of Prochlorococcus.</title>
        <authorList>
            <person name="Kettler G.C."/>
            <person name="Martiny A.C."/>
            <person name="Huang K."/>
            <person name="Zucker J."/>
            <person name="Coleman M.L."/>
            <person name="Rodrigue S."/>
            <person name="Chen F."/>
            <person name="Lapidus A."/>
            <person name="Ferriera S."/>
            <person name="Johnson J."/>
            <person name="Steglich C."/>
            <person name="Church G.M."/>
            <person name="Richardson P."/>
            <person name="Chisholm S.W."/>
        </authorList>
    </citation>
    <scope>NUCLEOTIDE SEQUENCE [LARGE SCALE GENOMIC DNA]</scope>
    <source>
        <strain>AS9601</strain>
    </source>
</reference>
<feature type="chain" id="PRO_0000294199" description="Photosystem I P700 chlorophyll a apoprotein A1">
    <location>
        <begin position="1"/>
        <end position="767"/>
    </location>
</feature>
<feature type="transmembrane region" description="Helical; Name=I" evidence="1">
    <location>
        <begin position="76"/>
        <end position="99"/>
    </location>
</feature>
<feature type="transmembrane region" description="Helical; Name=II" evidence="1">
    <location>
        <begin position="162"/>
        <end position="185"/>
    </location>
</feature>
<feature type="transmembrane region" description="Helical; Name=III" evidence="1">
    <location>
        <begin position="201"/>
        <end position="225"/>
    </location>
</feature>
<feature type="transmembrane region" description="Helical; Name=IV" evidence="1">
    <location>
        <begin position="309"/>
        <end position="327"/>
    </location>
</feature>
<feature type="transmembrane region" description="Helical; Name=V" evidence="1">
    <location>
        <begin position="368"/>
        <end position="391"/>
    </location>
</feature>
<feature type="transmembrane region" description="Helical; Name=VI" evidence="1">
    <location>
        <begin position="407"/>
        <end position="433"/>
    </location>
</feature>
<feature type="transmembrane region" description="Helical; Name=VII" evidence="1">
    <location>
        <begin position="455"/>
        <end position="477"/>
    </location>
</feature>
<feature type="transmembrane region" description="Helical; Name=VIII" evidence="1">
    <location>
        <begin position="558"/>
        <end position="576"/>
    </location>
</feature>
<feature type="transmembrane region" description="Helical; Name=IX" evidence="1">
    <location>
        <begin position="616"/>
        <end position="637"/>
    </location>
</feature>
<feature type="transmembrane region" description="Helical; Name=X" evidence="1">
    <location>
        <begin position="681"/>
        <end position="703"/>
    </location>
</feature>
<feature type="transmembrane region" description="Helical; Name=XI" evidence="1">
    <location>
        <begin position="741"/>
        <end position="761"/>
    </location>
</feature>
<feature type="region of interest" description="Disordered" evidence="2">
    <location>
        <begin position="1"/>
        <end position="22"/>
    </location>
</feature>
<feature type="compositionally biased region" description="Basic and acidic residues" evidence="2">
    <location>
        <begin position="8"/>
        <end position="22"/>
    </location>
</feature>
<feature type="binding site" evidence="1">
    <location>
        <position position="600"/>
    </location>
    <ligand>
        <name>[4Fe-4S] cluster</name>
        <dbReference type="ChEBI" id="CHEBI:49883"/>
        <note>ligand shared between dimeric partners</note>
    </ligand>
</feature>
<feature type="binding site" evidence="1">
    <location>
        <position position="609"/>
    </location>
    <ligand>
        <name>[4Fe-4S] cluster</name>
        <dbReference type="ChEBI" id="CHEBI:49883"/>
        <note>ligand shared between dimeric partners</note>
    </ligand>
</feature>
<feature type="binding site" description="axial binding residue" evidence="1">
    <location>
        <position position="692"/>
    </location>
    <ligand>
        <name>divinylchlorophyll a'</name>
        <dbReference type="ChEBI" id="CHEBI:189420"/>
        <label>A1</label>
    </ligand>
    <ligandPart>
        <name>Mg</name>
        <dbReference type="ChEBI" id="CHEBI:25107"/>
    </ligandPart>
</feature>
<feature type="binding site" description="axial binding residue" evidence="1">
    <location>
        <position position="700"/>
    </location>
    <ligand>
        <name>divinyl chlorophyll a</name>
        <dbReference type="ChEBI" id="CHEBI:73095"/>
        <label>A3</label>
    </ligand>
    <ligandPart>
        <name>Mg</name>
        <dbReference type="ChEBI" id="CHEBI:25107"/>
    </ligandPart>
</feature>
<feature type="binding site" evidence="1">
    <location>
        <position position="708"/>
    </location>
    <ligand>
        <name>divinyl chlorophyll a</name>
        <dbReference type="ChEBI" id="CHEBI:73095"/>
        <label>A3</label>
    </ligand>
</feature>
<feature type="binding site" evidence="1">
    <location>
        <position position="709"/>
    </location>
    <ligand>
        <name>phylloquinone</name>
        <dbReference type="ChEBI" id="CHEBI:18067"/>
        <label>A</label>
    </ligand>
</feature>